<protein>
    <recommendedName>
        <fullName evidence="1">Rhamnulose-1-phosphate aldolase</fullName>
        <ecNumber evidence="1">4.1.2.19</ecNumber>
    </recommendedName>
</protein>
<comment type="function">
    <text evidence="1">Catalyzes the reversible cleavage of L-rhamnulose-1-phosphate to dihydroxyacetone phosphate (DHAP) and L-lactaldehyde.</text>
</comment>
<comment type="catalytic activity">
    <reaction evidence="1">
        <text>L-rhamnulose 1-phosphate = (S)-lactaldehyde + dihydroxyacetone phosphate</text>
        <dbReference type="Rhea" id="RHEA:19689"/>
        <dbReference type="ChEBI" id="CHEBI:18041"/>
        <dbReference type="ChEBI" id="CHEBI:57642"/>
        <dbReference type="ChEBI" id="CHEBI:58313"/>
        <dbReference type="EC" id="4.1.2.19"/>
    </reaction>
</comment>
<comment type="cofactor">
    <cofactor evidence="1">
        <name>Zn(2+)</name>
        <dbReference type="ChEBI" id="CHEBI:29105"/>
    </cofactor>
    <text evidence="1">Binds 1 zinc ion per subunit.</text>
</comment>
<comment type="pathway">
    <text evidence="1">Carbohydrate degradation; L-rhamnose degradation; glycerone phosphate from L-rhamnose: step 3/3.</text>
</comment>
<comment type="subunit">
    <text evidence="1">Homotetramer.</text>
</comment>
<comment type="subcellular location">
    <subcellularLocation>
        <location evidence="1">Cytoplasm</location>
    </subcellularLocation>
</comment>
<comment type="similarity">
    <text evidence="1">Belongs to the aldolase class II family. RhaD subfamily.</text>
</comment>
<comment type="sequence caution" evidence="2">
    <conflict type="erroneous initiation">
        <sequence resource="EMBL-CDS" id="AAN83279"/>
    </conflict>
</comment>
<feature type="chain" id="PRO_0000209658" description="Rhamnulose-1-phosphate aldolase">
    <location>
        <begin position="1"/>
        <end position="274"/>
    </location>
</feature>
<feature type="active site" evidence="1">
    <location>
        <position position="117"/>
    </location>
</feature>
<feature type="binding site" evidence="1">
    <location>
        <position position="141"/>
    </location>
    <ligand>
        <name>Zn(2+)</name>
        <dbReference type="ChEBI" id="CHEBI:29105"/>
    </ligand>
</feature>
<feature type="binding site" evidence="1">
    <location>
        <position position="143"/>
    </location>
    <ligand>
        <name>Zn(2+)</name>
        <dbReference type="ChEBI" id="CHEBI:29105"/>
    </ligand>
</feature>
<feature type="binding site" evidence="1">
    <location>
        <position position="212"/>
    </location>
    <ligand>
        <name>Zn(2+)</name>
        <dbReference type="ChEBI" id="CHEBI:29105"/>
    </ligand>
</feature>
<keyword id="KW-0963">Cytoplasm</keyword>
<keyword id="KW-0456">Lyase</keyword>
<keyword id="KW-0479">Metal-binding</keyword>
<keyword id="KW-1185">Reference proteome</keyword>
<keyword id="KW-0684">Rhamnose metabolism</keyword>
<keyword id="KW-0862">Zinc</keyword>
<name>RHAD_ECOL6</name>
<accession>Q8FBE1</accession>
<reference key="1">
    <citation type="journal article" date="2002" name="Proc. Natl. Acad. Sci. U.S.A.">
        <title>Extensive mosaic structure revealed by the complete genome sequence of uropathogenic Escherichia coli.</title>
        <authorList>
            <person name="Welch R.A."/>
            <person name="Burland V."/>
            <person name="Plunkett G. III"/>
            <person name="Redford P."/>
            <person name="Roesch P."/>
            <person name="Rasko D."/>
            <person name="Buckles E.L."/>
            <person name="Liou S.-R."/>
            <person name="Boutin A."/>
            <person name="Hackett J."/>
            <person name="Stroud D."/>
            <person name="Mayhew G.F."/>
            <person name="Rose D.J."/>
            <person name="Zhou S."/>
            <person name="Schwartz D.C."/>
            <person name="Perna N.T."/>
            <person name="Mobley H.L.T."/>
            <person name="Donnenberg M.S."/>
            <person name="Blattner F.R."/>
        </authorList>
    </citation>
    <scope>NUCLEOTIDE SEQUENCE [LARGE SCALE GENOMIC DNA]</scope>
    <source>
        <strain>CFT073 / ATCC 700928 / UPEC</strain>
    </source>
</reference>
<dbReference type="EC" id="4.1.2.19" evidence="1"/>
<dbReference type="EMBL" id="AE014075">
    <property type="protein sequence ID" value="AAN83279.1"/>
    <property type="status" value="ALT_INIT"/>
    <property type="molecule type" value="Genomic_DNA"/>
</dbReference>
<dbReference type="RefSeq" id="WP_001179742.1">
    <property type="nucleotide sequence ID" value="NZ_CP051263.1"/>
</dbReference>
<dbReference type="SMR" id="Q8FBE1"/>
<dbReference type="STRING" id="199310.c4851"/>
<dbReference type="KEGG" id="ecc:c4851"/>
<dbReference type="eggNOG" id="COG0235">
    <property type="taxonomic scope" value="Bacteria"/>
</dbReference>
<dbReference type="HOGENOM" id="CLU_076831_0_0_6"/>
<dbReference type="UniPathway" id="UPA00541">
    <property type="reaction ID" value="UER00603"/>
</dbReference>
<dbReference type="Proteomes" id="UP000001410">
    <property type="component" value="Chromosome"/>
</dbReference>
<dbReference type="GO" id="GO:0005829">
    <property type="term" value="C:cytosol"/>
    <property type="evidence" value="ECO:0007669"/>
    <property type="project" value="TreeGrafter"/>
</dbReference>
<dbReference type="GO" id="GO:0046872">
    <property type="term" value="F:metal ion binding"/>
    <property type="evidence" value="ECO:0007669"/>
    <property type="project" value="UniProtKB-KW"/>
</dbReference>
<dbReference type="GO" id="GO:0008994">
    <property type="term" value="F:rhamnulose-1-phosphate aldolase activity"/>
    <property type="evidence" value="ECO:0007669"/>
    <property type="project" value="UniProtKB-UniRule"/>
</dbReference>
<dbReference type="GO" id="GO:0019323">
    <property type="term" value="P:pentose catabolic process"/>
    <property type="evidence" value="ECO:0007669"/>
    <property type="project" value="TreeGrafter"/>
</dbReference>
<dbReference type="GO" id="GO:0019301">
    <property type="term" value="P:rhamnose catabolic process"/>
    <property type="evidence" value="ECO:0007669"/>
    <property type="project" value="UniProtKB-UniRule"/>
</dbReference>
<dbReference type="CDD" id="cd00398">
    <property type="entry name" value="Aldolase_II"/>
    <property type="match status" value="1"/>
</dbReference>
<dbReference type="FunFam" id="3.40.225.10:FF:000006">
    <property type="entry name" value="Rhamnulose-1-phosphate aldolase"/>
    <property type="match status" value="1"/>
</dbReference>
<dbReference type="Gene3D" id="3.40.225.10">
    <property type="entry name" value="Class II aldolase/adducin N-terminal domain"/>
    <property type="match status" value="1"/>
</dbReference>
<dbReference type="HAMAP" id="MF_00770">
    <property type="entry name" value="RhaD"/>
    <property type="match status" value="1"/>
</dbReference>
<dbReference type="InterPro" id="IPR050197">
    <property type="entry name" value="Aldolase_class_II_sugar_metab"/>
</dbReference>
<dbReference type="InterPro" id="IPR001303">
    <property type="entry name" value="Aldolase_II/adducin_N"/>
</dbReference>
<dbReference type="InterPro" id="IPR036409">
    <property type="entry name" value="Aldolase_II/adducin_N_sf"/>
</dbReference>
<dbReference type="InterPro" id="IPR013447">
    <property type="entry name" value="Rhamnulose-1-P_Aldolase"/>
</dbReference>
<dbReference type="NCBIfam" id="NF002963">
    <property type="entry name" value="PRK03634.1"/>
    <property type="match status" value="1"/>
</dbReference>
<dbReference type="NCBIfam" id="TIGR02624">
    <property type="entry name" value="rhamnu_1P_ald"/>
    <property type="match status" value="1"/>
</dbReference>
<dbReference type="PANTHER" id="PTHR22789">
    <property type="entry name" value="FUCULOSE PHOSPHATE ALDOLASE"/>
    <property type="match status" value="1"/>
</dbReference>
<dbReference type="PANTHER" id="PTHR22789:SF16">
    <property type="entry name" value="RHAMNULOSE-1-PHOSPHATE ALDOLASE"/>
    <property type="match status" value="1"/>
</dbReference>
<dbReference type="Pfam" id="PF00596">
    <property type="entry name" value="Aldolase_II"/>
    <property type="match status" value="1"/>
</dbReference>
<dbReference type="SMART" id="SM01007">
    <property type="entry name" value="Aldolase_II"/>
    <property type="match status" value="1"/>
</dbReference>
<dbReference type="SUPFAM" id="SSF53639">
    <property type="entry name" value="AraD/HMP-PK domain-like"/>
    <property type="match status" value="1"/>
</dbReference>
<proteinExistence type="inferred from homology"/>
<evidence type="ECO:0000255" key="1">
    <source>
        <dbReference type="HAMAP-Rule" id="MF_00770"/>
    </source>
</evidence>
<evidence type="ECO:0000305" key="2"/>
<sequence length="274" mass="30192">MQNITQSWFVQGMIKATTDAWLKGWDERNGGNLTLRLDDADIAPYHDNFHQQPRYIPLSQPMPLLANTPFIVTGSGKFFRNVQLDPAANLGIVKVDSDGAGYHILWGLTNEAVPTSELPAHFLSHCERIKATNGKDRVIMHCHATNLIALTYVLENDTAVFTRQLWEGSTECLVVFPDGVGILPWMVPGTDEIGQATAQEMQKHSLMLWPFHGVFGSGPTLDETFGLIDTAEKSAQILVKVYSMGGMKQTISREELIALGQRFGVTPLASALAL</sequence>
<gene>
    <name evidence="1" type="primary">rhaD</name>
    <name type="ordered locus">c4851</name>
</gene>
<organism>
    <name type="scientific">Escherichia coli O6:H1 (strain CFT073 / ATCC 700928 / UPEC)</name>
    <dbReference type="NCBI Taxonomy" id="199310"/>
    <lineage>
        <taxon>Bacteria</taxon>
        <taxon>Pseudomonadati</taxon>
        <taxon>Pseudomonadota</taxon>
        <taxon>Gammaproteobacteria</taxon>
        <taxon>Enterobacterales</taxon>
        <taxon>Enterobacteriaceae</taxon>
        <taxon>Escherichia</taxon>
    </lineage>
</organism>